<reference key="1">
    <citation type="journal article" date="2003" name="Proc. Natl. Acad. Sci. U.S.A.">
        <title>The complete genome sequence of Mycobacterium bovis.</title>
        <authorList>
            <person name="Garnier T."/>
            <person name="Eiglmeier K."/>
            <person name="Camus J.-C."/>
            <person name="Medina N."/>
            <person name="Mansoor H."/>
            <person name="Pryor M."/>
            <person name="Duthoy S."/>
            <person name="Grondin S."/>
            <person name="Lacroix C."/>
            <person name="Monsempe C."/>
            <person name="Simon S."/>
            <person name="Harris B."/>
            <person name="Atkin R."/>
            <person name="Doggett J."/>
            <person name="Mayes R."/>
            <person name="Keating L."/>
            <person name="Wheeler P.R."/>
            <person name="Parkhill J."/>
            <person name="Barrell B.G."/>
            <person name="Cole S.T."/>
            <person name="Gordon S.V."/>
            <person name="Hewinson R.G."/>
        </authorList>
    </citation>
    <scope>NUCLEOTIDE SEQUENCE [LARGE SCALE GENOMIC DNA]</scope>
    <source>
        <strain>ATCC BAA-935 / AF2122/97</strain>
    </source>
</reference>
<reference key="2">
    <citation type="journal article" date="2017" name="Genome Announc.">
        <title>Updated reference genome sequence and annotation of Mycobacterium bovis AF2122/97.</title>
        <authorList>
            <person name="Malone K.M."/>
            <person name="Farrell D."/>
            <person name="Stuber T.P."/>
            <person name="Schubert O.T."/>
            <person name="Aebersold R."/>
            <person name="Robbe-Austerman S."/>
            <person name="Gordon S.V."/>
        </authorList>
    </citation>
    <scope>NUCLEOTIDE SEQUENCE [LARGE SCALE GENOMIC DNA]</scope>
    <scope>GENOME REANNOTATION</scope>
    <source>
        <strain>ATCC BAA-935 / AF2122/97</strain>
    </source>
</reference>
<protein>
    <recommendedName>
        <fullName>Uncharacterized protein Mb1449</fullName>
    </recommendedName>
</protein>
<proteinExistence type="predicted"/>
<sequence length="133" mass="14330">MLGDAQQLELGRCAPADIALTVAATVVSRQDCRSGLRRIVLDCGSKILGSDRPAWATGFGRLIDHADARIAALSEHHATVVWPDDAPLPPVGTRLRVIPNHVCLTTNLVDDVAVVRDATLIDRWKVAARGKNH</sequence>
<name>Y1449_MYCBO</name>
<organism>
    <name type="scientific">Mycobacterium bovis (strain ATCC BAA-935 / AF2122/97)</name>
    <dbReference type="NCBI Taxonomy" id="233413"/>
    <lineage>
        <taxon>Bacteria</taxon>
        <taxon>Bacillati</taxon>
        <taxon>Actinomycetota</taxon>
        <taxon>Actinomycetes</taxon>
        <taxon>Mycobacteriales</taxon>
        <taxon>Mycobacteriaceae</taxon>
        <taxon>Mycobacterium</taxon>
        <taxon>Mycobacterium tuberculosis complex</taxon>
    </lineage>
</organism>
<keyword id="KW-1185">Reference proteome</keyword>
<accession>P64846</accession>
<accession>A0A1R3XY97</accession>
<accession>P71683</accession>
<accession>X2BHJ9</accession>
<dbReference type="EMBL" id="LT708304">
    <property type="protein sequence ID" value="SIU00052.1"/>
    <property type="molecule type" value="Genomic_DNA"/>
</dbReference>
<dbReference type="RefSeq" id="NP_855101.1">
    <property type="nucleotide sequence ID" value="NC_002945.3"/>
</dbReference>
<dbReference type="SMR" id="P64846"/>
<dbReference type="KEGG" id="mbo:BQ2027_MB1449"/>
<dbReference type="PATRIC" id="fig|233413.5.peg.1584"/>
<dbReference type="Proteomes" id="UP000001419">
    <property type="component" value="Chromosome"/>
</dbReference>
<dbReference type="GO" id="GO:0008721">
    <property type="term" value="F:D-serine ammonia-lyase activity"/>
    <property type="evidence" value="ECO:0007669"/>
    <property type="project" value="TreeGrafter"/>
</dbReference>
<dbReference type="GO" id="GO:0036088">
    <property type="term" value="P:D-serine catabolic process"/>
    <property type="evidence" value="ECO:0007669"/>
    <property type="project" value="TreeGrafter"/>
</dbReference>
<dbReference type="Gene3D" id="2.40.37.20">
    <property type="entry name" value="D-serine dehydratase-like domain"/>
    <property type="match status" value="1"/>
</dbReference>
<dbReference type="InterPro" id="IPR051466">
    <property type="entry name" value="D-amino_acid_metab_enzyme"/>
</dbReference>
<dbReference type="InterPro" id="IPR026956">
    <property type="entry name" value="D-ser_dehydrat-like_dom"/>
</dbReference>
<dbReference type="InterPro" id="IPR042208">
    <property type="entry name" value="D-ser_dehydrat-like_sf"/>
</dbReference>
<dbReference type="PANTHER" id="PTHR28004:SF2">
    <property type="entry name" value="D-SERINE DEHYDRATASE"/>
    <property type="match status" value="1"/>
</dbReference>
<dbReference type="PANTHER" id="PTHR28004">
    <property type="entry name" value="ZGC:162816-RELATED"/>
    <property type="match status" value="1"/>
</dbReference>
<dbReference type="Pfam" id="PF14031">
    <property type="entry name" value="D-ser_dehydrat"/>
    <property type="match status" value="1"/>
</dbReference>
<dbReference type="SMART" id="SM01119">
    <property type="entry name" value="D-ser_dehydrat"/>
    <property type="match status" value="1"/>
</dbReference>
<feature type="chain" id="PRO_0000103842" description="Uncharacterized protein Mb1449">
    <location>
        <begin position="1"/>
        <end position="133"/>
    </location>
</feature>
<gene>
    <name type="ordered locus">BQ2027_MB1449</name>
</gene>